<feature type="chain" id="PRO_0000083129" description="Biosynthetic peptidoglycan transglycosylase">
    <location>
        <begin position="1"/>
        <end position="242"/>
    </location>
</feature>
<feature type="transmembrane region" description="Helical" evidence="1">
    <location>
        <begin position="19"/>
        <end position="39"/>
    </location>
</feature>
<evidence type="ECO:0000255" key="1">
    <source>
        <dbReference type="HAMAP-Rule" id="MF_00766"/>
    </source>
</evidence>
<evidence type="ECO:0000303" key="2">
    <source>
    </source>
</evidence>
<keyword id="KW-0997">Cell inner membrane</keyword>
<keyword id="KW-1003">Cell membrane</keyword>
<keyword id="KW-0133">Cell shape</keyword>
<keyword id="KW-0961">Cell wall biogenesis/degradation</keyword>
<keyword id="KW-0328">Glycosyltransferase</keyword>
<keyword id="KW-0472">Membrane</keyword>
<keyword id="KW-0573">Peptidoglycan synthesis</keyword>
<keyword id="KW-0808">Transferase</keyword>
<keyword id="KW-0812">Transmembrane</keyword>
<keyword id="KW-1133">Transmembrane helix</keyword>
<reference key="1">
    <citation type="journal article" date="1996" name="Mol. Microbiol.">
        <title>Monofunctional biosynthetic peptidoglycan transglycosylases.</title>
        <authorList>
            <person name="Spratt B.G."/>
            <person name="Zhou J."/>
            <person name="Taylor M."/>
            <person name="Merrick M.J."/>
        </authorList>
    </citation>
    <scope>NUCLEOTIDE SEQUENCE [GENOMIC DNA]</scope>
    <source>
        <strain>M5a1</strain>
    </source>
</reference>
<comment type="function">
    <text evidence="1">Peptidoglycan polymerase that catalyzes glycan chain elongation from lipid-linked precursors.</text>
</comment>
<comment type="catalytic activity">
    <reaction evidence="1">
        <text>[GlcNAc-(1-&gt;4)-Mur2Ac(oyl-L-Ala-gamma-D-Glu-L-Lys-D-Ala-D-Ala)](n)-di-trans,octa-cis-undecaprenyl diphosphate + beta-D-GlcNAc-(1-&gt;4)-Mur2Ac(oyl-L-Ala-gamma-D-Glu-L-Lys-D-Ala-D-Ala)-di-trans,octa-cis-undecaprenyl diphosphate = [GlcNAc-(1-&gt;4)-Mur2Ac(oyl-L-Ala-gamma-D-Glu-L-Lys-D-Ala-D-Ala)](n+1)-di-trans,octa-cis-undecaprenyl diphosphate + di-trans,octa-cis-undecaprenyl diphosphate + H(+)</text>
        <dbReference type="Rhea" id="RHEA:23708"/>
        <dbReference type="Rhea" id="RHEA-COMP:9602"/>
        <dbReference type="Rhea" id="RHEA-COMP:9603"/>
        <dbReference type="ChEBI" id="CHEBI:15378"/>
        <dbReference type="ChEBI" id="CHEBI:58405"/>
        <dbReference type="ChEBI" id="CHEBI:60033"/>
        <dbReference type="ChEBI" id="CHEBI:78435"/>
        <dbReference type="EC" id="2.4.99.28"/>
    </reaction>
</comment>
<comment type="pathway">
    <text evidence="1">Cell wall biogenesis; peptidoglycan biosynthesis.</text>
</comment>
<comment type="subcellular location">
    <subcellularLocation>
        <location evidence="1">Cell inner membrane</location>
        <topology evidence="1">Single-pass membrane protein</topology>
    </subcellularLocation>
</comment>
<comment type="similarity">
    <text evidence="1">Belongs to the glycosyltransferase 51 family.</text>
</comment>
<dbReference type="EC" id="2.4.99.28" evidence="1"/>
<dbReference type="EMBL" id="Z54198">
    <property type="protein sequence ID" value="CAA90903.1"/>
    <property type="molecule type" value="Genomic_DNA"/>
</dbReference>
<dbReference type="SMR" id="Q48465"/>
<dbReference type="STRING" id="571.AB185_09945"/>
<dbReference type="CAZy" id="GT51">
    <property type="family name" value="Glycosyltransferase Family 51"/>
</dbReference>
<dbReference type="eggNOG" id="COG0744">
    <property type="taxonomic scope" value="Bacteria"/>
</dbReference>
<dbReference type="UniPathway" id="UPA00219"/>
<dbReference type="GO" id="GO:0009274">
    <property type="term" value="C:peptidoglycan-based cell wall"/>
    <property type="evidence" value="ECO:0007669"/>
    <property type="project" value="InterPro"/>
</dbReference>
<dbReference type="GO" id="GO:0005886">
    <property type="term" value="C:plasma membrane"/>
    <property type="evidence" value="ECO:0007669"/>
    <property type="project" value="UniProtKB-SubCell"/>
</dbReference>
<dbReference type="GO" id="GO:0016763">
    <property type="term" value="F:pentosyltransferase activity"/>
    <property type="evidence" value="ECO:0007669"/>
    <property type="project" value="InterPro"/>
</dbReference>
<dbReference type="GO" id="GO:0008955">
    <property type="term" value="F:peptidoglycan glycosyltransferase activity"/>
    <property type="evidence" value="ECO:0007669"/>
    <property type="project" value="UniProtKB-UniRule"/>
</dbReference>
<dbReference type="GO" id="GO:0071555">
    <property type="term" value="P:cell wall organization"/>
    <property type="evidence" value="ECO:0007669"/>
    <property type="project" value="UniProtKB-KW"/>
</dbReference>
<dbReference type="GO" id="GO:0009252">
    <property type="term" value="P:peptidoglycan biosynthetic process"/>
    <property type="evidence" value="ECO:0007669"/>
    <property type="project" value="UniProtKB-UniRule"/>
</dbReference>
<dbReference type="GO" id="GO:0008360">
    <property type="term" value="P:regulation of cell shape"/>
    <property type="evidence" value="ECO:0007669"/>
    <property type="project" value="UniProtKB-KW"/>
</dbReference>
<dbReference type="Gene3D" id="1.10.3810.10">
    <property type="entry name" value="Biosynthetic peptidoglycan transglycosylase-like"/>
    <property type="match status" value="1"/>
</dbReference>
<dbReference type="HAMAP" id="MF_00766">
    <property type="entry name" value="PGT_MtgA"/>
    <property type="match status" value="1"/>
</dbReference>
<dbReference type="InterPro" id="IPR001264">
    <property type="entry name" value="Glyco_trans_51"/>
</dbReference>
<dbReference type="InterPro" id="IPR023346">
    <property type="entry name" value="Lysozyme-like_dom_sf"/>
</dbReference>
<dbReference type="InterPro" id="IPR036950">
    <property type="entry name" value="PBP_transglycosylase"/>
</dbReference>
<dbReference type="InterPro" id="IPR011812">
    <property type="entry name" value="Pep_trsgly"/>
</dbReference>
<dbReference type="NCBIfam" id="TIGR02070">
    <property type="entry name" value="mono_pep_trsgly"/>
    <property type="match status" value="1"/>
</dbReference>
<dbReference type="PANTHER" id="PTHR30400:SF0">
    <property type="entry name" value="BIOSYNTHETIC PEPTIDOGLYCAN TRANSGLYCOSYLASE"/>
    <property type="match status" value="1"/>
</dbReference>
<dbReference type="PANTHER" id="PTHR30400">
    <property type="entry name" value="MONOFUNCTIONAL BIOSYNTHETIC PEPTIDOGLYCAN TRANSGLYCOSYLASE"/>
    <property type="match status" value="1"/>
</dbReference>
<dbReference type="Pfam" id="PF00912">
    <property type="entry name" value="Transgly"/>
    <property type="match status" value="1"/>
</dbReference>
<dbReference type="SUPFAM" id="SSF53955">
    <property type="entry name" value="Lysozyme-like"/>
    <property type="match status" value="1"/>
</dbReference>
<organism>
    <name type="scientific">Klebsiella oxytoca</name>
    <dbReference type="NCBI Taxonomy" id="571"/>
    <lineage>
        <taxon>Bacteria</taxon>
        <taxon>Pseudomonadati</taxon>
        <taxon>Pseudomonadota</taxon>
        <taxon>Gammaproteobacteria</taxon>
        <taxon>Enterobacterales</taxon>
        <taxon>Enterobacteriaceae</taxon>
        <taxon>Klebsiella/Raoultella group</taxon>
        <taxon>Klebsiella</taxon>
    </lineage>
</organism>
<sequence>MTFRFSARCRLIKRFLLRLLLACAVLWGGGVALFSIVPVPFSAVMLERQLGAWLSGNFHYIAHSDWVGMDEISPWMGLAVIAAEDQKFPEHWGFDVPAIEKALAHNERNENRIRGASTLSQQTAKNLFLWDGRSWLRKGLEAGLTVGIETVWSKKRILTVYLNIAEFGEGTFGVEAASQRYFHKPASRLTAAEAALLAAVLPNPIRFRADAPSGYIRSRQAWILRQMRQLGGEGFMRANQLH</sequence>
<proteinExistence type="inferred from homology"/>
<protein>
    <recommendedName>
        <fullName evidence="1">Biosynthetic peptidoglycan transglycosylase</fullName>
        <ecNumber evidence="1">2.4.99.28</ecNumber>
    </recommendedName>
    <alternativeName>
        <fullName evidence="1">Glycan polymerase</fullName>
    </alternativeName>
    <alternativeName>
        <fullName evidence="2">Monofunctional biosynthetic peptidoglycan transglycosylase</fullName>
    </alternativeName>
    <alternativeName>
        <fullName evidence="1">Peptidoglycan glycosyltransferase MtgA</fullName>
        <shortName evidence="1">PGT</shortName>
    </alternativeName>
</protein>
<accession>Q48465</accession>
<gene>
    <name evidence="1" type="primary">mtgA</name>
</gene>
<name>MTGA_KLEOX</name>